<accession>Q26422</accession>
<proteinExistence type="evidence at transcript level"/>
<feature type="signal peptide" evidence="1">
    <location>
        <begin position="1"/>
        <end position="25"/>
    </location>
</feature>
<feature type="chain" id="PRO_0000028430" description="Limulus clotting factor C">
    <location>
        <begin position="26"/>
        <end position="1019"/>
    </location>
</feature>
<feature type="chain" id="PRO_0000028431" description="Limulus clotting factor C heavy chain">
    <location>
        <begin position="26"/>
        <end position="690"/>
    </location>
</feature>
<feature type="chain" id="PRO_0000028432" description="Limulus clotting factor C light chain">
    <location>
        <begin position="691"/>
        <end position="1019"/>
    </location>
</feature>
<feature type="chain" id="PRO_0000028433" description="Limulus clotting factor C chain A">
    <location>
        <begin position="691"/>
        <end position="762"/>
    </location>
</feature>
<feature type="chain" id="PRO_0000028434" description="Limulus clotting factor C chain B">
    <location>
        <begin position="763"/>
        <end position="1019"/>
    </location>
</feature>
<feature type="domain" description="EGF-like" evidence="4">
    <location>
        <begin position="102"/>
        <end position="137"/>
    </location>
</feature>
<feature type="domain" description="Sushi 1" evidence="7">
    <location>
        <begin position="140"/>
        <end position="197"/>
    </location>
</feature>
<feature type="domain" description="Sushi 2" evidence="7">
    <location>
        <begin position="198"/>
        <end position="256"/>
    </location>
</feature>
<feature type="domain" description="Sushi 3" evidence="7">
    <location>
        <begin position="258"/>
        <end position="323"/>
    </location>
</feature>
<feature type="domain" description="LCCL" evidence="5">
    <location>
        <begin position="325"/>
        <end position="421"/>
    </location>
</feature>
<feature type="domain" description="C-type lectin" evidence="3">
    <location>
        <begin position="436"/>
        <end position="568"/>
    </location>
</feature>
<feature type="domain" description="Sushi 4" evidence="7">
    <location>
        <begin position="574"/>
        <end position="636"/>
    </location>
</feature>
<feature type="domain" description="Sushi 5" evidence="7">
    <location>
        <begin position="689"/>
        <end position="750"/>
    </location>
</feature>
<feature type="domain" description="Peptidase S1" evidence="6">
    <location>
        <begin position="763"/>
        <end position="1019"/>
    </location>
</feature>
<feature type="active site" description="Charge relay system" evidence="1">
    <location>
        <position position="809"/>
    </location>
</feature>
<feature type="active site" description="Charge relay system" evidence="1">
    <location>
        <position position="865"/>
    </location>
</feature>
<feature type="active site" description="Charge relay system" evidence="1">
    <location>
        <position position="966"/>
    </location>
</feature>
<feature type="binding site" evidence="1">
    <location>
        <position position="960"/>
    </location>
    <ligand>
        <name>substrate</name>
    </ligand>
</feature>
<feature type="glycosylation site" description="N-linked (GlcNAc...) asparagine" evidence="2">
    <location>
        <position position="523"/>
    </location>
</feature>
<feature type="glycosylation site" description="N-linked (GlcNAc...) asparagine" evidence="2">
    <location>
        <position position="534"/>
    </location>
</feature>
<feature type="glycosylation site" description="N-linked (GlcNAc...) asparagine" evidence="2">
    <location>
        <position position="624"/>
    </location>
</feature>
<feature type="glycosylation site" description="N-linked (GlcNAc...) asparagine" evidence="2">
    <location>
        <position position="740"/>
    </location>
</feature>
<feature type="glycosylation site" description="N-linked (GlcNAc...) asparagine" evidence="2">
    <location>
        <position position="767"/>
    </location>
</feature>
<feature type="glycosylation site" description="N-linked (GlcNAc...) asparagine" evidence="2">
    <location>
        <position position="912"/>
    </location>
</feature>
<feature type="disulfide bond" evidence="1">
    <location>
        <begin position="106"/>
        <end position="118"/>
    </location>
</feature>
<feature type="disulfide bond" evidence="1">
    <location>
        <begin position="112"/>
        <end position="125"/>
    </location>
</feature>
<feature type="disulfide bond" evidence="1">
    <location>
        <begin position="127"/>
        <end position="136"/>
    </location>
</feature>
<feature type="disulfide bond" evidence="1">
    <location>
        <begin position="142"/>
        <end position="182"/>
    </location>
</feature>
<feature type="disulfide bond" evidence="1">
    <location>
        <begin position="168"/>
        <end position="195"/>
    </location>
</feature>
<feature type="disulfide bond" evidence="1">
    <location>
        <begin position="199"/>
        <end position="241"/>
    </location>
</feature>
<feature type="disulfide bond" evidence="1">
    <location>
        <begin position="227"/>
        <end position="254"/>
    </location>
</feature>
<feature type="disulfide bond" evidence="1">
    <location>
        <begin position="260"/>
        <end position="308"/>
    </location>
</feature>
<feature type="disulfide bond" evidence="1">
    <location>
        <begin position="294"/>
        <end position="321"/>
    </location>
</feature>
<feature type="disulfide bond" evidence="1">
    <location>
        <begin position="331"/>
        <end position="350"/>
    </location>
</feature>
<feature type="disulfide bond" evidence="1">
    <location>
        <begin position="354"/>
        <end position="374"/>
    </location>
</feature>
<feature type="disulfide bond" evidence="1">
    <location>
        <begin position="436"/>
        <end position="447"/>
    </location>
</feature>
<feature type="disulfide bond" evidence="1">
    <location>
        <begin position="464"/>
        <end position="564"/>
    </location>
</feature>
<feature type="disulfide bond" evidence="1">
    <location>
        <begin position="538"/>
        <end position="556"/>
    </location>
</feature>
<feature type="disulfide bond" evidence="1">
    <location>
        <begin position="576"/>
        <end position="621"/>
    </location>
</feature>
<feature type="disulfide bond" evidence="1">
    <location>
        <begin position="607"/>
        <end position="634"/>
    </location>
</feature>
<feature type="disulfide bond" evidence="1">
    <location>
        <begin position="720"/>
        <end position="748"/>
    </location>
</feature>
<feature type="disulfide bond" evidence="1">
    <location>
        <begin position="794"/>
        <end position="810"/>
    </location>
</feature>
<feature type="disulfide bond" evidence="1">
    <location>
        <begin position="932"/>
        <end position="951"/>
    </location>
</feature>
<feature type="disulfide bond" evidence="1">
    <location>
        <begin position="962"/>
        <end position="996"/>
    </location>
</feature>
<name>LFC_CARRO</name>
<dbReference type="EC" id="3.4.21.84"/>
<dbReference type="EMBL" id="S77063">
    <property type="protein sequence ID" value="AAB34361.1"/>
    <property type="molecule type" value="mRNA"/>
</dbReference>
<dbReference type="SMR" id="Q26422"/>
<dbReference type="MEROPS" id="S01.219"/>
<dbReference type="BRENDA" id="3.4.21.84">
    <property type="organism ID" value="6973"/>
</dbReference>
<dbReference type="GO" id="GO:0005576">
    <property type="term" value="C:extracellular region"/>
    <property type="evidence" value="ECO:0007669"/>
    <property type="project" value="UniProtKB-SubCell"/>
</dbReference>
<dbReference type="GO" id="GO:0030246">
    <property type="term" value="F:carbohydrate binding"/>
    <property type="evidence" value="ECO:0007669"/>
    <property type="project" value="UniProtKB-KW"/>
</dbReference>
<dbReference type="GO" id="GO:0004252">
    <property type="term" value="F:serine-type endopeptidase activity"/>
    <property type="evidence" value="ECO:0007669"/>
    <property type="project" value="InterPro"/>
</dbReference>
<dbReference type="GO" id="GO:0007155">
    <property type="term" value="P:cell adhesion"/>
    <property type="evidence" value="ECO:0007669"/>
    <property type="project" value="UniProtKB-KW"/>
</dbReference>
<dbReference type="GO" id="GO:0042381">
    <property type="term" value="P:hemolymph coagulation"/>
    <property type="evidence" value="ECO:0007669"/>
    <property type="project" value="UniProtKB-KW"/>
</dbReference>
<dbReference type="GO" id="GO:0006508">
    <property type="term" value="P:proteolysis"/>
    <property type="evidence" value="ECO:0007669"/>
    <property type="project" value="UniProtKB-KW"/>
</dbReference>
<dbReference type="CDD" id="cd00033">
    <property type="entry name" value="CCP"/>
    <property type="match status" value="5"/>
</dbReference>
<dbReference type="CDD" id="cd00037">
    <property type="entry name" value="CLECT"/>
    <property type="match status" value="1"/>
</dbReference>
<dbReference type="CDD" id="cd00055">
    <property type="entry name" value="EGF_Lam"/>
    <property type="match status" value="1"/>
</dbReference>
<dbReference type="CDD" id="cd00190">
    <property type="entry name" value="Tryp_SPc"/>
    <property type="match status" value="1"/>
</dbReference>
<dbReference type="FunFam" id="2.40.10.10:FF:000120">
    <property type="entry name" value="Putative serine protease"/>
    <property type="match status" value="1"/>
</dbReference>
<dbReference type="Gene3D" id="2.10.70.10">
    <property type="entry name" value="Complement Module, domain 1"/>
    <property type="match status" value="5"/>
</dbReference>
<dbReference type="Gene3D" id="2.170.130.20">
    <property type="entry name" value="LCCL-like domain"/>
    <property type="match status" value="1"/>
</dbReference>
<dbReference type="Gene3D" id="3.10.100.10">
    <property type="entry name" value="Mannose-Binding Protein A, subunit A"/>
    <property type="match status" value="1"/>
</dbReference>
<dbReference type="Gene3D" id="2.170.300.10">
    <property type="entry name" value="Tie2 ligand-binding domain superfamily"/>
    <property type="match status" value="1"/>
</dbReference>
<dbReference type="Gene3D" id="2.40.10.10">
    <property type="entry name" value="Trypsin-like serine proteases"/>
    <property type="match status" value="1"/>
</dbReference>
<dbReference type="InterPro" id="IPR001304">
    <property type="entry name" value="C-type_lectin-like"/>
</dbReference>
<dbReference type="InterPro" id="IPR016186">
    <property type="entry name" value="C-type_lectin-like/link_sf"/>
</dbReference>
<dbReference type="InterPro" id="IPR016187">
    <property type="entry name" value="CTDL_fold"/>
</dbReference>
<dbReference type="InterPro" id="IPR000742">
    <property type="entry name" value="EGF-like_dom"/>
</dbReference>
<dbReference type="InterPro" id="IPR004043">
    <property type="entry name" value="LCCL"/>
</dbReference>
<dbReference type="InterPro" id="IPR036609">
    <property type="entry name" value="LCCL_sf"/>
</dbReference>
<dbReference type="InterPro" id="IPR002049">
    <property type="entry name" value="LE_dom"/>
</dbReference>
<dbReference type="InterPro" id="IPR009003">
    <property type="entry name" value="Peptidase_S1_PA"/>
</dbReference>
<dbReference type="InterPro" id="IPR043504">
    <property type="entry name" value="Peptidase_S1_PA_chymotrypsin"/>
</dbReference>
<dbReference type="InterPro" id="IPR001314">
    <property type="entry name" value="Peptidase_S1A"/>
</dbReference>
<dbReference type="InterPro" id="IPR035976">
    <property type="entry name" value="Sushi/SCR/CCP_sf"/>
</dbReference>
<dbReference type="InterPro" id="IPR000436">
    <property type="entry name" value="Sushi_SCR_CCP_dom"/>
</dbReference>
<dbReference type="InterPro" id="IPR001254">
    <property type="entry name" value="Trypsin_dom"/>
</dbReference>
<dbReference type="InterPro" id="IPR018114">
    <property type="entry name" value="TRYPSIN_HIS"/>
</dbReference>
<dbReference type="InterPro" id="IPR033116">
    <property type="entry name" value="TRYPSIN_SER"/>
</dbReference>
<dbReference type="PANTHER" id="PTHR46393:SF7">
    <property type="entry name" value="COMPLEMENT C2"/>
    <property type="match status" value="1"/>
</dbReference>
<dbReference type="PANTHER" id="PTHR46393">
    <property type="entry name" value="SUSHI DOMAIN-CONTAINING PROTEIN"/>
    <property type="match status" value="1"/>
</dbReference>
<dbReference type="Pfam" id="PF03815">
    <property type="entry name" value="LCCL"/>
    <property type="match status" value="1"/>
</dbReference>
<dbReference type="Pfam" id="PF00059">
    <property type="entry name" value="Lectin_C"/>
    <property type="match status" value="1"/>
</dbReference>
<dbReference type="Pfam" id="PF00084">
    <property type="entry name" value="Sushi"/>
    <property type="match status" value="5"/>
</dbReference>
<dbReference type="Pfam" id="PF00089">
    <property type="entry name" value="Trypsin"/>
    <property type="match status" value="1"/>
</dbReference>
<dbReference type="PRINTS" id="PR00722">
    <property type="entry name" value="CHYMOTRYPSIN"/>
</dbReference>
<dbReference type="SMART" id="SM00032">
    <property type="entry name" value="CCP"/>
    <property type="match status" value="5"/>
</dbReference>
<dbReference type="SMART" id="SM00034">
    <property type="entry name" value="CLECT"/>
    <property type="match status" value="1"/>
</dbReference>
<dbReference type="SMART" id="SM00603">
    <property type="entry name" value="LCCL"/>
    <property type="match status" value="1"/>
</dbReference>
<dbReference type="SMART" id="SM00020">
    <property type="entry name" value="Tryp_SPc"/>
    <property type="match status" value="1"/>
</dbReference>
<dbReference type="SUPFAM" id="SSF56436">
    <property type="entry name" value="C-type lectin-like"/>
    <property type="match status" value="1"/>
</dbReference>
<dbReference type="SUPFAM" id="SSF57535">
    <property type="entry name" value="Complement control module/SCR domain"/>
    <property type="match status" value="5"/>
</dbReference>
<dbReference type="SUPFAM" id="SSF69848">
    <property type="entry name" value="LCCL domain"/>
    <property type="match status" value="1"/>
</dbReference>
<dbReference type="SUPFAM" id="SSF50494">
    <property type="entry name" value="Trypsin-like serine proteases"/>
    <property type="match status" value="1"/>
</dbReference>
<dbReference type="PROSITE" id="PS50041">
    <property type="entry name" value="C_TYPE_LECTIN_2"/>
    <property type="match status" value="1"/>
</dbReference>
<dbReference type="PROSITE" id="PS00022">
    <property type="entry name" value="EGF_1"/>
    <property type="match status" value="1"/>
</dbReference>
<dbReference type="PROSITE" id="PS50026">
    <property type="entry name" value="EGF_3"/>
    <property type="match status" value="1"/>
</dbReference>
<dbReference type="PROSITE" id="PS50820">
    <property type="entry name" value="LCCL"/>
    <property type="match status" value="1"/>
</dbReference>
<dbReference type="PROSITE" id="PS50923">
    <property type="entry name" value="SUSHI"/>
    <property type="match status" value="5"/>
</dbReference>
<dbReference type="PROSITE" id="PS50240">
    <property type="entry name" value="TRYPSIN_DOM"/>
    <property type="match status" value="1"/>
</dbReference>
<dbReference type="PROSITE" id="PS00134">
    <property type="entry name" value="TRYPSIN_HIS"/>
    <property type="match status" value="1"/>
</dbReference>
<dbReference type="PROSITE" id="PS00135">
    <property type="entry name" value="TRYPSIN_SER"/>
    <property type="match status" value="1"/>
</dbReference>
<sequence>MVLASFLVSGLVLGLLAQKMRPVQSKGVDLGLCDETRFECKCGDPGYVFNIPVKQCTYFYRWRPYCKPCDDLEAKDICPKYKRCQECKAGLDSCVTCPPNKYGTWCSGECQCKNGGICDQRTGACACRDRYEGVHCEILKGCPLLPSDSQVQEVRNPPDNPQTIDYSCSPGFKLKGMARISCLPNGQWSNFPPKCIRECAMVSSPEHGKVNALSGDMIEGATLRFSCDSPYYLIGQETLTCQGNGQWNGQIPQCKNLVFCPDLDPVNHAEHKVKIGVEQKYGQFPQGTEVTYTCSGNYFLMGFDTLKCNPDGSWSGSQPSCVKVADREVDCDSKAVDFLDDVGEPVRIHCPAGCSLTAGTVWGTAIYHELSSVCRAAIHAGKLPNSGGAVHVVNNGPYSDFLGSDLNGIKSEELKSLARSFRFDYVRSSTAGKSGCPDGWFEVDENCVYVTSKQRAWERAQGVCTNMAARLAVLDKDVIPNSLTETLRGKGLTTTWIGLHRLDAEKPFIWELMDRSNVVLNDNLTFWASGEPGNETNCVYMDIQDQLQSVWKTKSCFQPSSFACMMDLSDRNKAKCDDPGSLENGHATLHGQSIDGFYAGSSIRYSCEVLHYLSGTETVTCTTNGTWSAPKPRCIKVITCQNPPVPSYGSVEIKPPSRTNSISRVGSPFLRLPRLPLPLARAAKPPPKPRSSQPSTVDLASKVKLPEGHYRVGSRAIYTCESRYYELLGSQGRRCDSNGNWSGRPASCIPVCGRSDSPRSPFIWNGNSTEIGQWPWQAGISRWLADHNMWFLQCGGSLLNEKWIVTAAHCVTYSATAEIIDPNQFKMYLGKYYRDDSRDDDYVQVREALEIHVNPNYDPGNLNFDIALIQLKTPVTLTTRVQPICLPTDITTREHLKEGTLAVVTGWGLNENNTYSETIQQAVLPVVAASTCEEGYKEADLPLTVTENMFCAGYKKGRYDACSGDSGGPLVFADDSRTERRWVLEGIVSWGSPSGCGKANQYGGFTKVNVFLSWIRQFI</sequence>
<evidence type="ECO:0000250" key="1"/>
<evidence type="ECO:0000255" key="2"/>
<evidence type="ECO:0000255" key="3">
    <source>
        <dbReference type="PROSITE-ProRule" id="PRU00040"/>
    </source>
</evidence>
<evidence type="ECO:0000255" key="4">
    <source>
        <dbReference type="PROSITE-ProRule" id="PRU00076"/>
    </source>
</evidence>
<evidence type="ECO:0000255" key="5">
    <source>
        <dbReference type="PROSITE-ProRule" id="PRU00123"/>
    </source>
</evidence>
<evidence type="ECO:0000255" key="6">
    <source>
        <dbReference type="PROSITE-ProRule" id="PRU00274"/>
    </source>
</evidence>
<evidence type="ECO:0000255" key="7">
    <source>
        <dbReference type="PROSITE-ProRule" id="PRU00302"/>
    </source>
</evidence>
<protein>
    <recommendedName>
        <fullName>Limulus clotting factor C</fullName>
        <shortName>FC</shortName>
        <ecNumber>3.4.21.84</ecNumber>
    </recommendedName>
    <component>
        <recommendedName>
            <fullName>Limulus clotting factor C heavy chain</fullName>
        </recommendedName>
    </component>
    <component>
        <recommendedName>
            <fullName>Limulus clotting factor C light chain</fullName>
        </recommendedName>
    </component>
    <component>
        <recommendedName>
            <fullName>Limulus clotting factor C chain A</fullName>
        </recommendedName>
    </component>
    <component>
        <recommendedName>
            <fullName>Limulus clotting factor C chain B</fullName>
        </recommendedName>
    </component>
</protein>
<keyword id="KW-0130">Cell adhesion</keyword>
<keyword id="KW-1015">Disulfide bond</keyword>
<keyword id="KW-0245">EGF-like domain</keyword>
<keyword id="KW-0325">Glycoprotein</keyword>
<keyword id="KW-0353">Hemolymph clotting</keyword>
<keyword id="KW-0378">Hydrolase</keyword>
<keyword id="KW-0430">Lectin</keyword>
<keyword id="KW-0645">Protease</keyword>
<keyword id="KW-0677">Repeat</keyword>
<keyword id="KW-0964">Secreted</keyword>
<keyword id="KW-0720">Serine protease</keyword>
<keyword id="KW-0732">Signal</keyword>
<keyword id="KW-0768">Sushi</keyword>
<organism>
    <name type="scientific">Carcinoscorpius rotundicauda</name>
    <name type="common">Mangrove horseshoe crab</name>
    <name type="synonym">Limulus rotundicauda</name>
    <dbReference type="NCBI Taxonomy" id="6848"/>
    <lineage>
        <taxon>Eukaryota</taxon>
        <taxon>Metazoa</taxon>
        <taxon>Ecdysozoa</taxon>
        <taxon>Arthropoda</taxon>
        <taxon>Chelicerata</taxon>
        <taxon>Merostomata</taxon>
        <taxon>Xiphosura</taxon>
        <taxon>Limulidae</taxon>
        <taxon>Carcinoscorpius</taxon>
    </lineage>
</organism>
<reference key="1">
    <citation type="journal article" date="1995" name="Mol. Mar. Biol. Biotechnol.">
        <title>Molecular cloning and sequence analysis of factor C cDNA from the Singapore horseshoe crab, Carcinoscorpius rotundicauda.</title>
        <authorList>
            <person name="Ding J.L."/>
            <person name="Navas M.A. III"/>
            <person name="Ho B."/>
        </authorList>
    </citation>
    <scope>NUCLEOTIDE SEQUENCE [MRNA]</scope>
    <source>
        <tissue>Blood</tissue>
    </source>
</reference>
<comment type="function">
    <text>This enzyme is closely associated with an endotoxin-sensitive hemolymph coagulation system which may play important roles in both hemostasis and host defense mechanisms. Its active form catalyzes the activation of factor B.</text>
</comment>
<comment type="catalytic activity">
    <reaction>
        <text>Selective cleavage of 103-Arg-|-Ser-104 and 124-Ile-|-Ile-125 bonds in Limulus clotting factor B to form activated factor B. Cleavage of -Pro-Arg-|-Xaa- bonds in synthetic substrates.</text>
        <dbReference type="EC" id="3.4.21.84"/>
    </reaction>
</comment>
<comment type="activity regulation">
    <text evidence="1">Activated by Gram-negative bacterial lipopolysaccharides and chymotrypsin.</text>
</comment>
<comment type="subunit">
    <text evidence="1">Heterodimer of a light chain and a heavy chain linked by a disulfide bond.</text>
</comment>
<comment type="subcellular location">
    <subcellularLocation>
        <location>Secreted</location>
    </subcellularLocation>
    <text>Secreted in hemolymph.</text>
</comment>
<comment type="similarity">
    <text evidence="6">Belongs to the peptidase S1 family.</text>
</comment>